<reference key="1">
    <citation type="journal article" date="2008" name="Environ. Microbiol.">
        <title>The genome of Erwinia tasmaniensis strain Et1/99, a non-pathogenic bacterium in the genus Erwinia.</title>
        <authorList>
            <person name="Kube M."/>
            <person name="Migdoll A.M."/>
            <person name="Mueller I."/>
            <person name="Kuhl H."/>
            <person name="Beck A."/>
            <person name="Reinhardt R."/>
            <person name="Geider K."/>
        </authorList>
    </citation>
    <scope>NUCLEOTIDE SEQUENCE [LARGE SCALE GENOMIC DNA]</scope>
    <source>
        <strain>DSM 17950 / CFBP 7177 / CIP 109463 / NCPPB 4357 / Et1/99</strain>
    </source>
</reference>
<organism>
    <name type="scientific">Erwinia tasmaniensis (strain DSM 17950 / CFBP 7177 / CIP 109463 / NCPPB 4357 / Et1/99)</name>
    <dbReference type="NCBI Taxonomy" id="465817"/>
    <lineage>
        <taxon>Bacteria</taxon>
        <taxon>Pseudomonadati</taxon>
        <taxon>Pseudomonadota</taxon>
        <taxon>Gammaproteobacteria</taxon>
        <taxon>Enterobacterales</taxon>
        <taxon>Erwiniaceae</taxon>
        <taxon>Erwinia</taxon>
    </lineage>
</organism>
<comment type="function">
    <text evidence="1">Globally modulates RNA abundance by binding to RNase E (Rne) and regulating its endonucleolytic activity. Can modulate Rne action in a substrate-dependent manner by altering the composition of the degradosome. Modulates RNA-binding and helicase activities of the degradosome.</text>
</comment>
<comment type="subunit">
    <text evidence="1">Homotrimer. Binds to both RNA-binding sites in the C-terminal region of Rne and to RhlB.</text>
</comment>
<comment type="subcellular location">
    <subcellularLocation>
        <location evidence="1">Cytoplasm</location>
    </subcellularLocation>
</comment>
<comment type="similarity">
    <text evidence="1">Belongs to the RraA family.</text>
</comment>
<feature type="chain" id="PRO_1000194853" description="Regulator of ribonuclease activity A">
    <location>
        <begin position="1"/>
        <end position="161"/>
    </location>
</feature>
<name>RRAA_ERWT9</name>
<protein>
    <recommendedName>
        <fullName evidence="1">Regulator of ribonuclease activity A</fullName>
    </recommendedName>
</protein>
<dbReference type="EMBL" id="CU468135">
    <property type="protein sequence ID" value="CAO95163.1"/>
    <property type="molecule type" value="Genomic_DNA"/>
</dbReference>
<dbReference type="RefSeq" id="WP_012439889.1">
    <property type="nucleotide sequence ID" value="NC_010694.1"/>
</dbReference>
<dbReference type="SMR" id="B2VES2"/>
<dbReference type="STRING" id="465817.ETA_01170"/>
<dbReference type="KEGG" id="eta:ETA_01170"/>
<dbReference type="eggNOG" id="COG0684">
    <property type="taxonomic scope" value="Bacteria"/>
</dbReference>
<dbReference type="HOGENOM" id="CLU_072626_4_0_6"/>
<dbReference type="OrthoDB" id="943692at2"/>
<dbReference type="Proteomes" id="UP000001726">
    <property type="component" value="Chromosome"/>
</dbReference>
<dbReference type="GO" id="GO:0005829">
    <property type="term" value="C:cytosol"/>
    <property type="evidence" value="ECO:0007669"/>
    <property type="project" value="TreeGrafter"/>
</dbReference>
<dbReference type="GO" id="GO:0060698">
    <property type="term" value="F:endoribonuclease inhibitor activity"/>
    <property type="evidence" value="ECO:0007669"/>
    <property type="project" value="UniProtKB-UniRule"/>
</dbReference>
<dbReference type="GO" id="GO:0019899">
    <property type="term" value="F:enzyme binding"/>
    <property type="evidence" value="ECO:0007669"/>
    <property type="project" value="UniProtKB-UniRule"/>
</dbReference>
<dbReference type="GO" id="GO:1902369">
    <property type="term" value="P:negative regulation of RNA catabolic process"/>
    <property type="evidence" value="ECO:0007669"/>
    <property type="project" value="TreeGrafter"/>
</dbReference>
<dbReference type="CDD" id="cd16841">
    <property type="entry name" value="RraA_family"/>
    <property type="match status" value="1"/>
</dbReference>
<dbReference type="FunFam" id="3.50.30.40:FF:000001">
    <property type="entry name" value="Regulator of ribonuclease activity A"/>
    <property type="match status" value="1"/>
</dbReference>
<dbReference type="Gene3D" id="3.50.30.40">
    <property type="entry name" value="Ribonuclease E inhibitor RraA/RraA-like"/>
    <property type="match status" value="1"/>
</dbReference>
<dbReference type="HAMAP" id="MF_00471">
    <property type="entry name" value="RraA"/>
    <property type="match status" value="1"/>
</dbReference>
<dbReference type="InterPro" id="IPR010203">
    <property type="entry name" value="RraA"/>
</dbReference>
<dbReference type="InterPro" id="IPR005493">
    <property type="entry name" value="RraA/RraA-like"/>
</dbReference>
<dbReference type="InterPro" id="IPR036704">
    <property type="entry name" value="RraA/RraA-like_sf"/>
</dbReference>
<dbReference type="InterPro" id="IPR014339">
    <property type="entry name" value="RraA_gpbac"/>
</dbReference>
<dbReference type="NCBIfam" id="TIGR01935">
    <property type="entry name" value="NOT-MenG"/>
    <property type="match status" value="1"/>
</dbReference>
<dbReference type="NCBIfam" id="NF006875">
    <property type="entry name" value="PRK09372.1"/>
    <property type="match status" value="1"/>
</dbReference>
<dbReference type="NCBIfam" id="TIGR02998">
    <property type="entry name" value="RraA_entero"/>
    <property type="match status" value="1"/>
</dbReference>
<dbReference type="PANTHER" id="PTHR33254">
    <property type="entry name" value="4-HYDROXY-4-METHYL-2-OXOGLUTARATE ALDOLASE 3-RELATED"/>
    <property type="match status" value="1"/>
</dbReference>
<dbReference type="PANTHER" id="PTHR33254:SF29">
    <property type="entry name" value="REGULATOR OF RIBONUCLEASE ACTIVITY A"/>
    <property type="match status" value="1"/>
</dbReference>
<dbReference type="Pfam" id="PF03737">
    <property type="entry name" value="RraA-like"/>
    <property type="match status" value="1"/>
</dbReference>
<dbReference type="SUPFAM" id="SSF89562">
    <property type="entry name" value="RraA-like"/>
    <property type="match status" value="1"/>
</dbReference>
<gene>
    <name evidence="1" type="primary">rraA</name>
    <name type="ordered locus">ETA_01170</name>
</gene>
<evidence type="ECO:0000255" key="1">
    <source>
        <dbReference type="HAMAP-Rule" id="MF_00471"/>
    </source>
</evidence>
<sequence length="161" mass="17415">MKYDTSELCDIYHEEVNVVEPLFSNFGGRTSFGGQIITVKCFEDNGLLFDLLEENGRGRILLVDGGGSMRRALVDAALARLALQNEWEGIVVYGAVRQVDDLEELDIGIQAIAAIPVGAAGEGIGESDIRVNFGGVTFFSGDHLYADNTGMILSEDPLDIE</sequence>
<keyword id="KW-0963">Cytoplasm</keyword>
<keyword id="KW-1185">Reference proteome</keyword>
<proteinExistence type="inferred from homology"/>
<accession>B2VES2</accession>